<dbReference type="EMBL" id="M34193">
    <property type="protein sequence ID" value="AAA46780.1"/>
    <property type="molecule type" value="Genomic_DNA"/>
</dbReference>
<dbReference type="EMBL" id="M31646">
    <property type="protein sequence ID" value="AAA66813.1"/>
    <property type="molecule type" value="Genomic_RNA"/>
</dbReference>
<dbReference type="RefSeq" id="NP_041250.1">
    <property type="nucleotide sequence ID" value="NC_001511.1"/>
</dbReference>
<dbReference type="SMR" id="P16902"/>
<dbReference type="KEGG" id="vg:1489980"/>
<dbReference type="Proteomes" id="UP000243523">
    <property type="component" value="Segment"/>
</dbReference>
<dbReference type="GO" id="GO:0030430">
    <property type="term" value="C:host cell cytoplasm"/>
    <property type="evidence" value="ECO:0007669"/>
    <property type="project" value="UniProtKB-SubCell"/>
</dbReference>
<dbReference type="GO" id="GO:0044423">
    <property type="term" value="C:virion component"/>
    <property type="evidence" value="ECO:0007669"/>
    <property type="project" value="UniProtKB-KW"/>
</dbReference>
<dbReference type="InterPro" id="IPR009979">
    <property type="entry name" value="Lenti_VIF_2"/>
</dbReference>
<dbReference type="Pfam" id="PF07401">
    <property type="entry name" value="Lenti_VIF_2"/>
    <property type="match status" value="1"/>
</dbReference>
<feature type="chain" id="PRO_0000085503" description="Virion infectivity factor">
    <location>
        <begin position="1"/>
        <end position="228"/>
    </location>
</feature>
<sequence>MLSSYRNQKKYKQNKIREVGPQLPLWAWKEIAFSINQEPYWYSTIRLQGLMWNKRGHKLIFVKEENGYEYWETTNKQWRMELRRDLRLIAQINFRNAWQYKSQEKWNIIGIWYDSPGEYRDKEKQFWFHWRIAMCSCKKERWDIRDFMVGKHRWDLCKSCIQGEIVRHTEPRSLQRLALLHIVRNHVFQIMPLWRARRVTVQRFPWSGTEGLYDTLVYTGLLGHGINI</sequence>
<reference key="1">
    <citation type="journal article" date="1990" name="Virology">
        <title>Nucleotide sequence analysis of SA-OMVV, a visna-related ovine lentivirus: phylogenetic history of lentiviruses.</title>
        <authorList>
            <person name="Querat G."/>
            <person name="Audoly G."/>
            <person name="Sonigo P."/>
            <person name="Vigne R."/>
        </authorList>
    </citation>
    <scope>NUCLEOTIDE SEQUENCE [GENOMIC DNA]</scope>
</reference>
<organismHost>
    <name type="scientific">Ovis aries</name>
    <name type="common">Sheep</name>
    <dbReference type="NCBI Taxonomy" id="9940"/>
</organismHost>
<protein>
    <recommendedName>
        <fullName>Virion infectivity factor</fullName>
    </recommendedName>
    <alternativeName>
        <fullName>Q protein</fullName>
    </alternativeName>
</protein>
<keyword id="KW-1035">Host cytoplasm</keyword>
<keyword id="KW-0946">Virion</keyword>
<gene>
    <name type="primary">vif</name>
</gene>
<accession>P16902</accession>
<comment type="subcellular location">
    <subcellularLocation>
        <location evidence="1">Host cytoplasm</location>
    </subcellularLocation>
    <subcellularLocation>
        <location evidence="1">Virion</location>
    </subcellularLocation>
</comment>
<comment type="similarity">
    <text evidence="2">Belongs to the ovine/caprine lentivirus group Vif protein family.</text>
</comment>
<name>VIF_OMVVS</name>
<organism>
    <name type="scientific">Ovine maedi visna related virus (strain South Africa)</name>
    <name type="common">SA-OMVV</name>
    <name type="synonym">Ovine lentivirus</name>
    <dbReference type="NCBI Taxonomy" id="11664"/>
    <lineage>
        <taxon>Viruses</taxon>
        <taxon>Riboviria</taxon>
        <taxon>Pararnavirae</taxon>
        <taxon>Artverviricota</taxon>
        <taxon>Revtraviricetes</taxon>
        <taxon>Ortervirales</taxon>
        <taxon>Retroviridae</taxon>
        <taxon>Orthoretrovirinae</taxon>
        <taxon>Lentivirus</taxon>
        <taxon>Visna-maedi virus</taxon>
    </lineage>
</organism>
<proteinExistence type="inferred from homology"/>
<evidence type="ECO:0000250" key="1"/>
<evidence type="ECO:0000305" key="2"/>